<gene>
    <name evidence="1" type="primary">sat</name>
    <name type="ordered locus">lp_1378</name>
</gene>
<sequence>MQTVYGIKAHGGKLVNLEDFSEATRQAAEQLPSLTINNWNISDLELIGIGGFSPLTGFMVSDDYHSVVNTMHLKSGVIWSVPITLGVSQADADKIELNTKIALKGADGVIYGTMQVEDKFVPDKQLEAQNVYKTTDEAHPGVKRLYANGDVYLGGAIKLLHKPDHGAFSDYYMEPLETRKMFHDLGWKRIVGFQTRNPIHRAHEYIQKLALENVDGLFLNPLVGETKADDIPADVRMESYKTILKYYYPEDRVRLVIYPAAMRYAGPKEAILHAIVRKNYGCTDFIVGRDHAGVGDYYGTYEAQELITSVEDEMGMHFFKFDNSFYCKKCGSMATQKTCPHGAEDHISLSGTKVRKMLADGVVPPKEVSRPEVARVLIDGLKRKREQQQEV</sequence>
<proteinExistence type="inferred from homology"/>
<name>SAT_LACPL</name>
<dbReference type="EC" id="2.7.7.4" evidence="1"/>
<dbReference type="EMBL" id="AL935263">
    <property type="protein sequence ID" value="CCC78726.1"/>
    <property type="molecule type" value="Genomic_DNA"/>
</dbReference>
<dbReference type="RefSeq" id="WP_011101379.1">
    <property type="nucleotide sequence ID" value="NC_004567.2"/>
</dbReference>
<dbReference type="RefSeq" id="YP_004889240.1">
    <property type="nucleotide sequence ID" value="NC_004567.2"/>
</dbReference>
<dbReference type="SMR" id="Q88X61"/>
<dbReference type="STRING" id="220668.lp_1378"/>
<dbReference type="EnsemblBacteria" id="CCC78726">
    <property type="protein sequence ID" value="CCC78726"/>
    <property type="gene ID" value="lp_1378"/>
</dbReference>
<dbReference type="KEGG" id="lpl:lp_1378"/>
<dbReference type="PATRIC" id="fig|220668.9.peg.1157"/>
<dbReference type="eggNOG" id="COG2046">
    <property type="taxonomic scope" value="Bacteria"/>
</dbReference>
<dbReference type="HOGENOM" id="CLU_022950_1_1_9"/>
<dbReference type="OrthoDB" id="9804504at2"/>
<dbReference type="PhylomeDB" id="Q88X61"/>
<dbReference type="UniPathway" id="UPA00140">
    <property type="reaction ID" value="UER00204"/>
</dbReference>
<dbReference type="Proteomes" id="UP000000432">
    <property type="component" value="Chromosome"/>
</dbReference>
<dbReference type="GO" id="GO:0005524">
    <property type="term" value="F:ATP binding"/>
    <property type="evidence" value="ECO:0007669"/>
    <property type="project" value="UniProtKB-KW"/>
</dbReference>
<dbReference type="GO" id="GO:0004781">
    <property type="term" value="F:sulfate adenylyltransferase (ATP) activity"/>
    <property type="evidence" value="ECO:0007669"/>
    <property type="project" value="UniProtKB-UniRule"/>
</dbReference>
<dbReference type="GO" id="GO:0070814">
    <property type="term" value="P:hydrogen sulfide biosynthetic process"/>
    <property type="evidence" value="ECO:0007669"/>
    <property type="project" value="UniProtKB-UniRule"/>
</dbReference>
<dbReference type="GO" id="GO:0000103">
    <property type="term" value="P:sulfate assimilation"/>
    <property type="evidence" value="ECO:0007669"/>
    <property type="project" value="UniProtKB-UniRule"/>
</dbReference>
<dbReference type="CDD" id="cd00517">
    <property type="entry name" value="ATPS"/>
    <property type="match status" value="1"/>
</dbReference>
<dbReference type="Gene3D" id="3.40.50.620">
    <property type="entry name" value="HUPs"/>
    <property type="match status" value="1"/>
</dbReference>
<dbReference type="Gene3D" id="3.10.400.10">
    <property type="entry name" value="Sulfate adenylyltransferase"/>
    <property type="match status" value="1"/>
</dbReference>
<dbReference type="HAMAP" id="MF_00066">
    <property type="entry name" value="Sulf_adenylyltr"/>
    <property type="match status" value="1"/>
</dbReference>
<dbReference type="InterPro" id="IPR025980">
    <property type="entry name" value="ATP-Sase_PUA-like_dom"/>
</dbReference>
<dbReference type="InterPro" id="IPR015947">
    <property type="entry name" value="PUA-like_sf"/>
</dbReference>
<dbReference type="InterPro" id="IPR014729">
    <property type="entry name" value="Rossmann-like_a/b/a_fold"/>
</dbReference>
<dbReference type="InterPro" id="IPR020792">
    <property type="entry name" value="SO4_adenylyltransferase_pro"/>
</dbReference>
<dbReference type="InterPro" id="IPR024951">
    <property type="entry name" value="Sulfurylase_cat_dom"/>
</dbReference>
<dbReference type="InterPro" id="IPR002650">
    <property type="entry name" value="Sulphate_adenylyltransferase"/>
</dbReference>
<dbReference type="NCBIfam" id="NF003166">
    <property type="entry name" value="PRK04149.1"/>
    <property type="match status" value="1"/>
</dbReference>
<dbReference type="NCBIfam" id="TIGR00339">
    <property type="entry name" value="sopT"/>
    <property type="match status" value="1"/>
</dbReference>
<dbReference type="PANTHER" id="PTHR43509">
    <property type="match status" value="1"/>
</dbReference>
<dbReference type="PANTHER" id="PTHR43509:SF1">
    <property type="entry name" value="SULFATE ADENYLYLTRANSFERASE"/>
    <property type="match status" value="1"/>
</dbReference>
<dbReference type="Pfam" id="PF01747">
    <property type="entry name" value="ATP-sulfurylase"/>
    <property type="match status" value="1"/>
</dbReference>
<dbReference type="Pfam" id="PF14306">
    <property type="entry name" value="PUA_2"/>
    <property type="match status" value="1"/>
</dbReference>
<dbReference type="SUPFAM" id="SSF52374">
    <property type="entry name" value="Nucleotidylyl transferase"/>
    <property type="match status" value="1"/>
</dbReference>
<dbReference type="SUPFAM" id="SSF88697">
    <property type="entry name" value="PUA domain-like"/>
    <property type="match status" value="1"/>
</dbReference>
<protein>
    <recommendedName>
        <fullName evidence="1">Sulfate adenylyltransferase</fullName>
        <ecNumber evidence="1">2.7.7.4</ecNumber>
    </recommendedName>
    <alternativeName>
        <fullName evidence="1">ATP-sulfurylase</fullName>
    </alternativeName>
    <alternativeName>
        <fullName evidence="1">Sulfate adenylate transferase</fullName>
        <shortName evidence="1">SAT</shortName>
    </alternativeName>
</protein>
<accession>Q88X61</accession>
<accession>F9UND7</accession>
<reference key="1">
    <citation type="journal article" date="2003" name="Proc. Natl. Acad. Sci. U.S.A.">
        <title>Complete genome sequence of Lactobacillus plantarum WCFS1.</title>
        <authorList>
            <person name="Kleerebezem M."/>
            <person name="Boekhorst J."/>
            <person name="van Kranenburg R."/>
            <person name="Molenaar D."/>
            <person name="Kuipers O.P."/>
            <person name="Leer R."/>
            <person name="Tarchini R."/>
            <person name="Peters S.A."/>
            <person name="Sandbrink H.M."/>
            <person name="Fiers M.W.E.J."/>
            <person name="Stiekema W."/>
            <person name="Klein Lankhorst R.M."/>
            <person name="Bron P.A."/>
            <person name="Hoffer S.M."/>
            <person name="Nierop Groot M.N."/>
            <person name="Kerkhoven R."/>
            <person name="De Vries M."/>
            <person name="Ursing B."/>
            <person name="De Vos W.M."/>
            <person name="Siezen R.J."/>
        </authorList>
    </citation>
    <scope>NUCLEOTIDE SEQUENCE [LARGE SCALE GENOMIC DNA]</scope>
    <source>
        <strain>ATCC BAA-793 / NCIMB 8826 / WCFS1</strain>
    </source>
</reference>
<reference key="2">
    <citation type="journal article" date="2012" name="J. Bacteriol.">
        <title>Complete resequencing and reannotation of the Lactobacillus plantarum WCFS1 genome.</title>
        <authorList>
            <person name="Siezen R.J."/>
            <person name="Francke C."/>
            <person name="Renckens B."/>
            <person name="Boekhorst J."/>
            <person name="Wels M."/>
            <person name="Kleerebezem M."/>
            <person name="van Hijum S.A."/>
        </authorList>
    </citation>
    <scope>NUCLEOTIDE SEQUENCE [LARGE SCALE GENOMIC DNA]</scope>
    <scope>GENOME REANNOTATION</scope>
    <source>
        <strain>ATCC BAA-793 / NCIMB 8826 / WCFS1</strain>
    </source>
</reference>
<evidence type="ECO:0000255" key="1">
    <source>
        <dbReference type="HAMAP-Rule" id="MF_00066"/>
    </source>
</evidence>
<keyword id="KW-0067">ATP-binding</keyword>
<keyword id="KW-0547">Nucleotide-binding</keyword>
<keyword id="KW-0548">Nucleotidyltransferase</keyword>
<keyword id="KW-1185">Reference proteome</keyword>
<keyword id="KW-0808">Transferase</keyword>
<organism>
    <name type="scientific">Lactiplantibacillus plantarum (strain ATCC BAA-793 / NCIMB 8826 / WCFS1)</name>
    <name type="common">Lactobacillus plantarum</name>
    <dbReference type="NCBI Taxonomy" id="220668"/>
    <lineage>
        <taxon>Bacteria</taxon>
        <taxon>Bacillati</taxon>
        <taxon>Bacillota</taxon>
        <taxon>Bacilli</taxon>
        <taxon>Lactobacillales</taxon>
        <taxon>Lactobacillaceae</taxon>
        <taxon>Lactiplantibacillus</taxon>
    </lineage>
</organism>
<feature type="chain" id="PRO_0000340624" description="Sulfate adenylyltransferase">
    <location>
        <begin position="1"/>
        <end position="391"/>
    </location>
</feature>
<comment type="catalytic activity">
    <reaction evidence="1">
        <text>sulfate + ATP + H(+) = adenosine 5'-phosphosulfate + diphosphate</text>
        <dbReference type="Rhea" id="RHEA:18133"/>
        <dbReference type="ChEBI" id="CHEBI:15378"/>
        <dbReference type="ChEBI" id="CHEBI:16189"/>
        <dbReference type="ChEBI" id="CHEBI:30616"/>
        <dbReference type="ChEBI" id="CHEBI:33019"/>
        <dbReference type="ChEBI" id="CHEBI:58243"/>
        <dbReference type="EC" id="2.7.7.4"/>
    </reaction>
</comment>
<comment type="pathway">
    <text evidence="1">Sulfur metabolism; hydrogen sulfide biosynthesis; sulfite from sulfate: step 1/3.</text>
</comment>
<comment type="similarity">
    <text evidence="1">Belongs to the sulfate adenylyltransferase family.</text>
</comment>